<evidence type="ECO:0000255" key="1">
    <source>
        <dbReference type="HAMAP-Rule" id="MF_00165"/>
    </source>
</evidence>
<sequence length="206" mass="23128">MARGKFITFEGIDGAGKTTHLQWFCDRLQERLGPTGRHVVVTREPGGTQLGETLREILLNQPMDLETEALLMFAGRREHLALVIEPALARGDWVVSDRFTDATFAYQGGGRGLPRDKLEALERWVQGGFQPDLTVLFDVQPQVASARRGAVRMPDKFESESDAFFARTRAEYLRRAHEAPHRFAIVDSSESIPQIRRQLEGVLAAL</sequence>
<reference key="1">
    <citation type="journal article" date="2010" name="Genome Biol. Evol.">
        <title>Continuing evolution of Burkholderia mallei through genome reduction and large-scale rearrangements.</title>
        <authorList>
            <person name="Losada L."/>
            <person name="Ronning C.M."/>
            <person name="DeShazer D."/>
            <person name="Woods D."/>
            <person name="Fedorova N."/>
            <person name="Kim H.S."/>
            <person name="Shabalina S.A."/>
            <person name="Pearson T.R."/>
            <person name="Brinkac L."/>
            <person name="Tan P."/>
            <person name="Nandi T."/>
            <person name="Crabtree J."/>
            <person name="Badger J."/>
            <person name="Beckstrom-Sternberg S."/>
            <person name="Saqib M."/>
            <person name="Schutzer S.E."/>
            <person name="Keim P."/>
            <person name="Nierman W.C."/>
        </authorList>
    </citation>
    <scope>NUCLEOTIDE SEQUENCE [LARGE SCALE GENOMIC DNA]</scope>
    <source>
        <strain>1710b</strain>
    </source>
</reference>
<proteinExistence type="inferred from homology"/>
<comment type="function">
    <text evidence="1">Phosphorylation of dTMP to form dTDP in both de novo and salvage pathways of dTTP synthesis.</text>
</comment>
<comment type="catalytic activity">
    <reaction evidence="1">
        <text>dTMP + ATP = dTDP + ADP</text>
        <dbReference type="Rhea" id="RHEA:13517"/>
        <dbReference type="ChEBI" id="CHEBI:30616"/>
        <dbReference type="ChEBI" id="CHEBI:58369"/>
        <dbReference type="ChEBI" id="CHEBI:63528"/>
        <dbReference type="ChEBI" id="CHEBI:456216"/>
        <dbReference type="EC" id="2.7.4.9"/>
    </reaction>
</comment>
<comment type="similarity">
    <text evidence="1">Belongs to the thymidylate kinase family.</text>
</comment>
<keyword id="KW-0067">ATP-binding</keyword>
<keyword id="KW-0418">Kinase</keyword>
<keyword id="KW-0545">Nucleotide biosynthesis</keyword>
<keyword id="KW-0547">Nucleotide-binding</keyword>
<keyword id="KW-0808">Transferase</keyword>
<protein>
    <recommendedName>
        <fullName evidence="1">Thymidylate kinase</fullName>
        <ecNumber evidence="1">2.7.4.9</ecNumber>
    </recommendedName>
    <alternativeName>
        <fullName evidence="1">dTMP kinase</fullName>
    </alternativeName>
</protein>
<feature type="chain" id="PRO_1000023162" description="Thymidylate kinase">
    <location>
        <begin position="1"/>
        <end position="206"/>
    </location>
</feature>
<feature type="binding site" evidence="1">
    <location>
        <begin position="11"/>
        <end position="18"/>
    </location>
    <ligand>
        <name>ATP</name>
        <dbReference type="ChEBI" id="CHEBI:30616"/>
    </ligand>
</feature>
<organism>
    <name type="scientific">Burkholderia pseudomallei (strain 1710b)</name>
    <dbReference type="NCBI Taxonomy" id="320372"/>
    <lineage>
        <taxon>Bacteria</taxon>
        <taxon>Pseudomonadati</taxon>
        <taxon>Pseudomonadota</taxon>
        <taxon>Betaproteobacteria</taxon>
        <taxon>Burkholderiales</taxon>
        <taxon>Burkholderiaceae</taxon>
        <taxon>Burkholderia</taxon>
        <taxon>pseudomallei group</taxon>
    </lineage>
</organism>
<name>KTHY_BURP1</name>
<dbReference type="EC" id="2.7.4.9" evidence="1"/>
<dbReference type="EMBL" id="CP000124">
    <property type="protein sequence ID" value="ABA49526.1"/>
    <property type="molecule type" value="Genomic_DNA"/>
</dbReference>
<dbReference type="RefSeq" id="WP_004527198.1">
    <property type="nucleotide sequence ID" value="NC_007434.1"/>
</dbReference>
<dbReference type="SMR" id="Q3JRG5"/>
<dbReference type="EnsemblBacteria" id="ABA49526">
    <property type="protein sequence ID" value="ABA49526"/>
    <property type="gene ID" value="BURPS1710b_2443"/>
</dbReference>
<dbReference type="GeneID" id="93060558"/>
<dbReference type="KEGG" id="bpm:BURPS1710b_2443"/>
<dbReference type="HOGENOM" id="CLU_049131_0_2_4"/>
<dbReference type="Proteomes" id="UP000002700">
    <property type="component" value="Chromosome I"/>
</dbReference>
<dbReference type="GO" id="GO:0005829">
    <property type="term" value="C:cytosol"/>
    <property type="evidence" value="ECO:0007669"/>
    <property type="project" value="TreeGrafter"/>
</dbReference>
<dbReference type="GO" id="GO:0005524">
    <property type="term" value="F:ATP binding"/>
    <property type="evidence" value="ECO:0007669"/>
    <property type="project" value="UniProtKB-UniRule"/>
</dbReference>
<dbReference type="GO" id="GO:0004798">
    <property type="term" value="F:dTMP kinase activity"/>
    <property type="evidence" value="ECO:0007669"/>
    <property type="project" value="UniProtKB-UniRule"/>
</dbReference>
<dbReference type="GO" id="GO:0006233">
    <property type="term" value="P:dTDP biosynthetic process"/>
    <property type="evidence" value="ECO:0007669"/>
    <property type="project" value="InterPro"/>
</dbReference>
<dbReference type="GO" id="GO:0006235">
    <property type="term" value="P:dTTP biosynthetic process"/>
    <property type="evidence" value="ECO:0007669"/>
    <property type="project" value="UniProtKB-UniRule"/>
</dbReference>
<dbReference type="GO" id="GO:0006227">
    <property type="term" value="P:dUDP biosynthetic process"/>
    <property type="evidence" value="ECO:0007669"/>
    <property type="project" value="TreeGrafter"/>
</dbReference>
<dbReference type="CDD" id="cd01672">
    <property type="entry name" value="TMPK"/>
    <property type="match status" value="1"/>
</dbReference>
<dbReference type="FunFam" id="3.40.50.300:FF:000225">
    <property type="entry name" value="Thymidylate kinase"/>
    <property type="match status" value="1"/>
</dbReference>
<dbReference type="Gene3D" id="3.40.50.300">
    <property type="entry name" value="P-loop containing nucleotide triphosphate hydrolases"/>
    <property type="match status" value="1"/>
</dbReference>
<dbReference type="HAMAP" id="MF_00165">
    <property type="entry name" value="Thymidylate_kinase"/>
    <property type="match status" value="1"/>
</dbReference>
<dbReference type="InterPro" id="IPR027417">
    <property type="entry name" value="P-loop_NTPase"/>
</dbReference>
<dbReference type="InterPro" id="IPR039430">
    <property type="entry name" value="Thymidylate_kin-like_dom"/>
</dbReference>
<dbReference type="InterPro" id="IPR018094">
    <property type="entry name" value="Thymidylate_kinase"/>
</dbReference>
<dbReference type="NCBIfam" id="TIGR00041">
    <property type="entry name" value="DTMP_kinase"/>
    <property type="match status" value="1"/>
</dbReference>
<dbReference type="PANTHER" id="PTHR10344">
    <property type="entry name" value="THYMIDYLATE KINASE"/>
    <property type="match status" value="1"/>
</dbReference>
<dbReference type="PANTHER" id="PTHR10344:SF4">
    <property type="entry name" value="UMP-CMP KINASE 2, MITOCHONDRIAL"/>
    <property type="match status" value="1"/>
</dbReference>
<dbReference type="Pfam" id="PF02223">
    <property type="entry name" value="Thymidylate_kin"/>
    <property type="match status" value="1"/>
</dbReference>
<dbReference type="SUPFAM" id="SSF52540">
    <property type="entry name" value="P-loop containing nucleoside triphosphate hydrolases"/>
    <property type="match status" value="1"/>
</dbReference>
<gene>
    <name evidence="1" type="primary">tmk</name>
    <name type="ordered locus">BURPS1710b_2443</name>
</gene>
<accession>Q3JRG5</accession>